<proteinExistence type="predicted"/>
<dbReference type="EMBL" id="AF158101">
    <property type="protein sequence ID" value="AAD42618.1"/>
    <property type="molecule type" value="Genomic_DNA"/>
</dbReference>
<dbReference type="RefSeq" id="NP_049882.1">
    <property type="nucleotide sequence ID" value="NC_000866.4"/>
</dbReference>
<dbReference type="GeneID" id="1258767"/>
<dbReference type="KEGG" id="vg:1258767"/>
<dbReference type="OrthoDB" id="23537at10239"/>
<dbReference type="Proteomes" id="UP000009087">
    <property type="component" value="Segment"/>
</dbReference>
<dbReference type="InterPro" id="IPR055672">
    <property type="entry name" value="DUF7248"/>
</dbReference>
<dbReference type="Pfam" id="PF23906">
    <property type="entry name" value="DUF7248"/>
    <property type="match status" value="1"/>
</dbReference>
<organismHost>
    <name type="scientific">Escherichia coli</name>
    <dbReference type="NCBI Taxonomy" id="562"/>
</organismHost>
<gene>
    <name type="primary">y16M</name>
    <name type="synonym">ndd.2A</name>
    <name type="synonym">ndd.3</name>
</gene>
<organism>
    <name type="scientific">Enterobacteria phage T4</name>
    <name type="common">Bacteriophage T4</name>
    <dbReference type="NCBI Taxonomy" id="10665"/>
    <lineage>
        <taxon>Viruses</taxon>
        <taxon>Duplodnaviria</taxon>
        <taxon>Heunggongvirae</taxon>
        <taxon>Uroviricota</taxon>
        <taxon>Caudoviricetes</taxon>
        <taxon>Straboviridae</taxon>
        <taxon>Tevenvirinae</taxon>
        <taxon>Tequatrovirus</taxon>
    </lineage>
</organism>
<feature type="chain" id="PRO_0000165209" description="Uncharacterized 4.3 kDa protein in ndd-denB intergenic region">
    <location>
        <begin position="1"/>
        <end position="40"/>
    </location>
</feature>
<name>Y16M_BPT4</name>
<protein>
    <recommendedName>
        <fullName>Uncharacterized 4.3 kDa protein in ndd-denB intergenic region</fullName>
    </recommendedName>
</protein>
<reference key="1">
    <citation type="journal article" date="2003" name="Microbiol. Mol. Biol. Rev.">
        <title>Bacteriophage T4 genome.</title>
        <authorList>
            <person name="Miller E.S."/>
            <person name="Kutter E."/>
            <person name="Mosig G."/>
            <person name="Arisaka F."/>
            <person name="Kunisawa T."/>
            <person name="Ruger W."/>
        </authorList>
    </citation>
    <scope>NUCLEOTIDE SEQUENCE [LARGE SCALE GENOMIC DNA]</scope>
</reference>
<keyword id="KW-1185">Reference proteome</keyword>
<sequence>MLIFALGSVVVGIYLMAVVGMDIHQNGLKSVVETIWNGVK</sequence>
<accession>P39245</accession>
<accession>Q9T0S6</accession>